<gene>
    <name type="primary">cenD</name>
</gene>
<comment type="catalytic activity">
    <reaction>
        <text>Endohydrolysis of (1-&gt;4)-beta-D-glucosidic linkages in cellulose, lichenin and cereal beta-D-glucans.</text>
        <dbReference type="EC" id="3.2.1.4"/>
    </reaction>
</comment>
<comment type="pathway">
    <text>Glycan metabolism; cellulose degradation.</text>
</comment>
<comment type="similarity">
    <text evidence="6">Belongs to the glycosyl hydrolase 5 (cellulase A) family.</text>
</comment>
<evidence type="ECO:0000250" key="1"/>
<evidence type="ECO:0000255" key="2"/>
<evidence type="ECO:0000255" key="3">
    <source>
        <dbReference type="PROSITE-ProRule" id="PRU00316"/>
    </source>
</evidence>
<evidence type="ECO:0000255" key="4">
    <source>
        <dbReference type="PROSITE-ProRule" id="PRU01135"/>
    </source>
</evidence>
<evidence type="ECO:0000256" key="5">
    <source>
        <dbReference type="SAM" id="MobiDB-lite"/>
    </source>
</evidence>
<evidence type="ECO:0000305" key="6"/>
<organism>
    <name type="scientific">Cellulomonas fimi</name>
    <dbReference type="NCBI Taxonomy" id="1708"/>
    <lineage>
        <taxon>Bacteria</taxon>
        <taxon>Bacillati</taxon>
        <taxon>Actinomycetota</taxon>
        <taxon>Actinomycetes</taxon>
        <taxon>Micrococcales</taxon>
        <taxon>Cellulomonadaceae</taxon>
        <taxon>Cellulomonas</taxon>
    </lineage>
</organism>
<name>GUND_CELFI</name>
<proteinExistence type="inferred from homology"/>
<feature type="signal peptide" evidence="2">
    <location>
        <begin position="1"/>
        <end position="39"/>
    </location>
</feature>
<feature type="chain" id="PRO_0000007843" description="Endoglucanase D">
    <location>
        <begin position="40"/>
        <end position="747"/>
    </location>
</feature>
<feature type="domain" description="Fibronectin type-III 1" evidence="3">
    <location>
        <begin position="456"/>
        <end position="543"/>
    </location>
</feature>
<feature type="domain" description="Fibronectin type-III 2" evidence="3">
    <location>
        <begin position="552"/>
        <end position="639"/>
    </location>
</feature>
<feature type="domain" description="CBM2" evidence="4">
    <location>
        <begin position="638"/>
        <end position="747"/>
    </location>
</feature>
<feature type="region of interest" description="Disordered" evidence="5">
    <location>
        <begin position="456"/>
        <end position="475"/>
    </location>
</feature>
<feature type="compositionally biased region" description="Polar residues" evidence="5">
    <location>
        <begin position="465"/>
        <end position="475"/>
    </location>
</feature>
<feature type="active site" description="Proton donor" evidence="1">
    <location>
        <position position="208"/>
    </location>
</feature>
<feature type="active site" description="Nucleophile" evidence="1">
    <location>
        <position position="349"/>
    </location>
</feature>
<keyword id="KW-0119">Carbohydrate metabolism</keyword>
<keyword id="KW-0136">Cellulose degradation</keyword>
<keyword id="KW-0326">Glycosidase</keyword>
<keyword id="KW-0378">Hydrolase</keyword>
<keyword id="KW-0624">Polysaccharide degradation</keyword>
<keyword id="KW-0677">Repeat</keyword>
<keyword id="KW-0732">Signal</keyword>
<protein>
    <recommendedName>
        <fullName>Endoglucanase D</fullName>
        <ecNumber>3.2.1.4</ecNumber>
    </recommendedName>
    <alternativeName>
        <fullName>Cellulase D</fullName>
    </alternativeName>
    <alternativeName>
        <fullName>Endo-1,4-beta-glucanase D</fullName>
    </alternativeName>
</protein>
<accession>P50400</accession>
<sequence>MHSASRTRARTRVRTAVSGLLAATVLAAPLTLVAAPAQAATGDDWLHVEGNTIVDSTGKEAILSGVNWFGFNASERVFHGLWSGNITQITQQMAQRGINVVRVPVSTQLLLEWKAGTFLKPNVNTYANPELEGKNSLQIFEYWLTLCQKYGIKVFLDVHSAEADNSGHVYNMWWKGDITTEDVYEGWEWAATRWKDDDTIVGADIKNEPHGTQGSTERAKWDGTTDKDNFKHFAETASKKILAINPNWLVFVEGVEIYPKPGVPWTSTGLTDYYGTWWGGNLRGVRDHPIDLGAHQDQLVYSPHDYGPLVFDQKWFQKDFDKASLTADVWGPNWLFIHDEDIAPLLIGEWGGRLGQDPRQDKWMAALRDLVAERRLSQTFWVLNPNSGDTGGLLLDDWKTWDEVKYSTMLEPTLWKHGGKYVGLDHQVPLGGVGSTTGTSISQVGGGTPDTTAPTAPTGLRAGTPTASTVPLTWSASTDTGGSGVAGYEVYRGTTLVGTTTATSYTVTGLAADSAYTFSVRAKDGAGNTSAASAAVTARTAAGGGDVTAPSVPTGLTAGTPTATSVPLTWTASTDTGGSGVTGYEVYRGSTLVARPTGTSHTVTGLSAATAYTFTVRAVDAAGNVSAASAPVGVTTAPDPTTGSCAVTYTANGWSGGFTAAVTLTNTGTTALSGWTLGFAFPSGQTLTQGWSARWAQSGSSVTATNEAWNAVLAPGASVEIGFSGTHTGTNTAPATFTVGGATCTTR</sequence>
<reference key="1">
    <citation type="journal article" date="1993" name="J. Bacteriol.">
        <title>Cellulose-binding polypeptides from Cellulomonas fimi: endoglucanase D (CenD), a family A beta-1,4-glucanase.</title>
        <authorList>
            <person name="Meinke A."/>
            <person name="Gilkes N.R."/>
            <person name="Kilburn D.G."/>
            <person name="Miller R.C. Jr."/>
            <person name="Warren R.A.J."/>
        </authorList>
    </citation>
    <scope>NUCLEOTIDE SEQUENCE [GENOMIC DNA]</scope>
</reference>
<dbReference type="EC" id="3.2.1.4"/>
<dbReference type="EMBL" id="L02544">
    <property type="protein sequence ID" value="AAA23089.1"/>
    <property type="molecule type" value="Genomic_DNA"/>
</dbReference>
<dbReference type="PIR" id="B47093">
    <property type="entry name" value="B47093"/>
</dbReference>
<dbReference type="RefSeq" id="WP_013771080.1">
    <property type="nucleotide sequence ID" value="NZ_LR134387.1"/>
</dbReference>
<dbReference type="SMR" id="P50400"/>
<dbReference type="CAZy" id="CBM2">
    <property type="family name" value="Carbohydrate-Binding Module Family 2"/>
</dbReference>
<dbReference type="CAZy" id="GH5">
    <property type="family name" value="Glycoside Hydrolase Family 5"/>
</dbReference>
<dbReference type="OrthoDB" id="4902692at2"/>
<dbReference type="UniPathway" id="UPA00696"/>
<dbReference type="GO" id="GO:0008810">
    <property type="term" value="F:cellulase activity"/>
    <property type="evidence" value="ECO:0007669"/>
    <property type="project" value="UniProtKB-EC"/>
</dbReference>
<dbReference type="GO" id="GO:0030247">
    <property type="term" value="F:polysaccharide binding"/>
    <property type="evidence" value="ECO:0007669"/>
    <property type="project" value="InterPro"/>
</dbReference>
<dbReference type="GO" id="GO:0030245">
    <property type="term" value="P:cellulose catabolic process"/>
    <property type="evidence" value="ECO:0007669"/>
    <property type="project" value="UniProtKB-UniPathway"/>
</dbReference>
<dbReference type="CDD" id="cd00063">
    <property type="entry name" value="FN3"/>
    <property type="match status" value="2"/>
</dbReference>
<dbReference type="Gene3D" id="2.60.40.290">
    <property type="match status" value="1"/>
</dbReference>
<dbReference type="Gene3D" id="3.20.20.80">
    <property type="entry name" value="Glycosidases"/>
    <property type="match status" value="1"/>
</dbReference>
<dbReference type="Gene3D" id="2.60.40.10">
    <property type="entry name" value="Immunoglobulins"/>
    <property type="match status" value="2"/>
</dbReference>
<dbReference type="InterPro" id="IPR001919">
    <property type="entry name" value="CBD2"/>
</dbReference>
<dbReference type="InterPro" id="IPR008965">
    <property type="entry name" value="CBM2/CBM3_carb-bd_dom_sf"/>
</dbReference>
<dbReference type="InterPro" id="IPR012291">
    <property type="entry name" value="CBM2_carb-bd_dom_sf"/>
</dbReference>
<dbReference type="InterPro" id="IPR003961">
    <property type="entry name" value="FN3_dom"/>
</dbReference>
<dbReference type="InterPro" id="IPR036116">
    <property type="entry name" value="FN3_sf"/>
</dbReference>
<dbReference type="InterPro" id="IPR001547">
    <property type="entry name" value="Glyco_hydro_5"/>
</dbReference>
<dbReference type="InterPro" id="IPR018087">
    <property type="entry name" value="Glyco_hydro_5_CS"/>
</dbReference>
<dbReference type="InterPro" id="IPR017853">
    <property type="entry name" value="Glycoside_hydrolase_SF"/>
</dbReference>
<dbReference type="InterPro" id="IPR013783">
    <property type="entry name" value="Ig-like_fold"/>
</dbReference>
<dbReference type="PANTHER" id="PTHR35923:SF2">
    <property type="entry name" value="ENDOGLUCANASE"/>
    <property type="match status" value="1"/>
</dbReference>
<dbReference type="PANTHER" id="PTHR35923">
    <property type="entry name" value="MAJOR EXTRACELLULAR ENDOGLUCANASE"/>
    <property type="match status" value="1"/>
</dbReference>
<dbReference type="Pfam" id="PF00553">
    <property type="entry name" value="CBM_2"/>
    <property type="match status" value="1"/>
</dbReference>
<dbReference type="Pfam" id="PF00150">
    <property type="entry name" value="Cellulase"/>
    <property type="match status" value="1"/>
</dbReference>
<dbReference type="Pfam" id="PF00041">
    <property type="entry name" value="fn3"/>
    <property type="match status" value="2"/>
</dbReference>
<dbReference type="SMART" id="SM00637">
    <property type="entry name" value="CBD_II"/>
    <property type="match status" value="1"/>
</dbReference>
<dbReference type="SMART" id="SM00060">
    <property type="entry name" value="FN3"/>
    <property type="match status" value="2"/>
</dbReference>
<dbReference type="SUPFAM" id="SSF51445">
    <property type="entry name" value="(Trans)glycosidases"/>
    <property type="match status" value="1"/>
</dbReference>
<dbReference type="SUPFAM" id="SSF49384">
    <property type="entry name" value="Carbohydrate-binding domain"/>
    <property type="match status" value="1"/>
</dbReference>
<dbReference type="SUPFAM" id="SSF49265">
    <property type="entry name" value="Fibronectin type III"/>
    <property type="match status" value="1"/>
</dbReference>
<dbReference type="PROSITE" id="PS51173">
    <property type="entry name" value="CBM2"/>
    <property type="match status" value="1"/>
</dbReference>
<dbReference type="PROSITE" id="PS50853">
    <property type="entry name" value="FN3"/>
    <property type="match status" value="2"/>
</dbReference>
<dbReference type="PROSITE" id="PS00659">
    <property type="entry name" value="GLYCOSYL_HYDROL_F5"/>
    <property type="match status" value="1"/>
</dbReference>